<evidence type="ECO:0000255" key="1">
    <source>
        <dbReference type="HAMAP-Rule" id="MF_00391"/>
    </source>
</evidence>
<evidence type="ECO:0000305" key="2"/>
<feature type="chain" id="PRO_1000013408" description="Large ribosomal subunit protein bL34">
    <location>
        <begin position="1"/>
        <end position="44"/>
    </location>
</feature>
<accession>Q1I2H1</accession>
<comment type="similarity">
    <text evidence="1">Belongs to the bacterial ribosomal protein bL34 family.</text>
</comment>
<organism>
    <name type="scientific">Pseudomonas entomophila (strain L48)</name>
    <dbReference type="NCBI Taxonomy" id="384676"/>
    <lineage>
        <taxon>Bacteria</taxon>
        <taxon>Pseudomonadati</taxon>
        <taxon>Pseudomonadota</taxon>
        <taxon>Gammaproteobacteria</taxon>
        <taxon>Pseudomonadales</taxon>
        <taxon>Pseudomonadaceae</taxon>
        <taxon>Pseudomonas</taxon>
    </lineage>
</organism>
<protein>
    <recommendedName>
        <fullName evidence="1">Large ribosomal subunit protein bL34</fullName>
    </recommendedName>
    <alternativeName>
        <fullName evidence="2">50S ribosomal protein L34</fullName>
    </alternativeName>
</protein>
<keyword id="KW-0687">Ribonucleoprotein</keyword>
<keyword id="KW-0689">Ribosomal protein</keyword>
<proteinExistence type="inferred from homology"/>
<gene>
    <name evidence="1" type="primary">rpmH</name>
    <name type="ordered locus">PSEEN5559</name>
</gene>
<reference key="1">
    <citation type="journal article" date="2006" name="Nat. Biotechnol.">
        <title>Complete genome sequence of the entomopathogenic and metabolically versatile soil bacterium Pseudomonas entomophila.</title>
        <authorList>
            <person name="Vodovar N."/>
            <person name="Vallenet D."/>
            <person name="Cruveiller S."/>
            <person name="Rouy Z."/>
            <person name="Barbe V."/>
            <person name="Acosta C."/>
            <person name="Cattolico L."/>
            <person name="Jubin C."/>
            <person name="Lajus A."/>
            <person name="Segurens B."/>
            <person name="Vacherie B."/>
            <person name="Wincker P."/>
            <person name="Weissenbach J."/>
            <person name="Lemaitre B."/>
            <person name="Medigue C."/>
            <person name="Boccard F."/>
        </authorList>
    </citation>
    <scope>NUCLEOTIDE SEQUENCE [LARGE SCALE GENOMIC DNA]</scope>
    <source>
        <strain>L48</strain>
    </source>
</reference>
<sequence>MKRTFQPSTIKRARTHGFRARMATKNGRAVLSRRRAKGRKRLAI</sequence>
<dbReference type="EMBL" id="CT573326">
    <property type="protein sequence ID" value="CAK18165.1"/>
    <property type="molecule type" value="Genomic_DNA"/>
</dbReference>
<dbReference type="RefSeq" id="WP_003253163.1">
    <property type="nucleotide sequence ID" value="NC_008027.1"/>
</dbReference>
<dbReference type="SMR" id="Q1I2H1"/>
<dbReference type="STRING" id="384676.PSEEN5559"/>
<dbReference type="GeneID" id="97170756"/>
<dbReference type="KEGG" id="pen:PSEEN5559"/>
<dbReference type="eggNOG" id="COG0230">
    <property type="taxonomic scope" value="Bacteria"/>
</dbReference>
<dbReference type="HOGENOM" id="CLU_129938_2_0_6"/>
<dbReference type="OrthoDB" id="9804164at2"/>
<dbReference type="Proteomes" id="UP000000658">
    <property type="component" value="Chromosome"/>
</dbReference>
<dbReference type="GO" id="GO:1990904">
    <property type="term" value="C:ribonucleoprotein complex"/>
    <property type="evidence" value="ECO:0007669"/>
    <property type="project" value="UniProtKB-KW"/>
</dbReference>
<dbReference type="GO" id="GO:0005840">
    <property type="term" value="C:ribosome"/>
    <property type="evidence" value="ECO:0007669"/>
    <property type="project" value="UniProtKB-KW"/>
</dbReference>
<dbReference type="GO" id="GO:0003735">
    <property type="term" value="F:structural constituent of ribosome"/>
    <property type="evidence" value="ECO:0007669"/>
    <property type="project" value="InterPro"/>
</dbReference>
<dbReference type="GO" id="GO:0006412">
    <property type="term" value="P:translation"/>
    <property type="evidence" value="ECO:0007669"/>
    <property type="project" value="UniProtKB-UniRule"/>
</dbReference>
<dbReference type="FunFam" id="1.10.287.3980:FF:000001">
    <property type="entry name" value="Mitochondrial ribosomal protein L34"/>
    <property type="match status" value="1"/>
</dbReference>
<dbReference type="Gene3D" id="1.10.287.3980">
    <property type="match status" value="1"/>
</dbReference>
<dbReference type="HAMAP" id="MF_00391">
    <property type="entry name" value="Ribosomal_bL34"/>
    <property type="match status" value="1"/>
</dbReference>
<dbReference type="InterPro" id="IPR000271">
    <property type="entry name" value="Ribosomal_bL34"/>
</dbReference>
<dbReference type="InterPro" id="IPR020939">
    <property type="entry name" value="Ribosomal_bL34_CS"/>
</dbReference>
<dbReference type="NCBIfam" id="TIGR01030">
    <property type="entry name" value="rpmH_bact"/>
    <property type="match status" value="1"/>
</dbReference>
<dbReference type="PANTHER" id="PTHR14503:SF4">
    <property type="entry name" value="LARGE RIBOSOMAL SUBUNIT PROTEIN BL34M"/>
    <property type="match status" value="1"/>
</dbReference>
<dbReference type="PANTHER" id="PTHR14503">
    <property type="entry name" value="MITOCHONDRIAL RIBOSOMAL PROTEIN 34 FAMILY MEMBER"/>
    <property type="match status" value="1"/>
</dbReference>
<dbReference type="Pfam" id="PF00468">
    <property type="entry name" value="Ribosomal_L34"/>
    <property type="match status" value="1"/>
</dbReference>
<dbReference type="PROSITE" id="PS00784">
    <property type="entry name" value="RIBOSOMAL_L34"/>
    <property type="match status" value="1"/>
</dbReference>
<name>RL34_PSEE4</name>